<keyword id="KW-0520">NAD</keyword>
<keyword id="KW-0560">Oxidoreductase</keyword>
<feature type="chain" id="PRO_1000099202" description="Mannitol-1-phosphate 5-dehydrogenase">
    <location>
        <begin position="1"/>
        <end position="382"/>
    </location>
</feature>
<feature type="binding site" evidence="1">
    <location>
        <begin position="3"/>
        <end position="14"/>
    </location>
    <ligand>
        <name>NAD(+)</name>
        <dbReference type="ChEBI" id="CHEBI:57540"/>
    </ligand>
</feature>
<reference key="1">
    <citation type="journal article" date="2011" name="J. Bacteriol.">
        <title>Comparative genomics of 28 Salmonella enterica isolates: evidence for CRISPR-mediated adaptive sublineage evolution.</title>
        <authorList>
            <person name="Fricke W.F."/>
            <person name="Mammel M.K."/>
            <person name="McDermott P.F."/>
            <person name="Tartera C."/>
            <person name="White D.G."/>
            <person name="Leclerc J.E."/>
            <person name="Ravel J."/>
            <person name="Cebula T.A."/>
        </authorList>
    </citation>
    <scope>NUCLEOTIDE SEQUENCE [LARGE SCALE GENOMIC DNA]</scope>
    <source>
        <strain>CVM19633</strain>
    </source>
</reference>
<name>MTLD_SALSV</name>
<organism>
    <name type="scientific">Salmonella schwarzengrund (strain CVM19633)</name>
    <dbReference type="NCBI Taxonomy" id="439843"/>
    <lineage>
        <taxon>Bacteria</taxon>
        <taxon>Pseudomonadati</taxon>
        <taxon>Pseudomonadota</taxon>
        <taxon>Gammaproteobacteria</taxon>
        <taxon>Enterobacterales</taxon>
        <taxon>Enterobacteriaceae</taxon>
        <taxon>Salmonella</taxon>
    </lineage>
</organism>
<proteinExistence type="inferred from homology"/>
<sequence length="382" mass="40938">MKALHFGAGNIGRGFIGKLLADAGIQLTFADVNQVVLDALNARHSYQVHVVGENEQVDTVSGVNAVSSIGDDVVDLIAHVDLITTAVGPVVLERIAPAIAKGLVKRKAQGVDAPLNIIACENMVRGTTQLKGHVMNALADGDKAWVEQHVGFVDSAVDRIVPPSASATHDPLEVTVETFSEWIVDKTQFKGALPTIPGMELTDNLMAFVERKLFTLNTGHAITAYLGKLAGHQTIRDAILDESIRAVVKGAMEESGAVLIKRYGFDADKHAAYIQKILGRFENPYLKDDVERVGRQPLRKLSAGDRLIKPLLGTLEYGLPHVNLVKGIAAAMHFRSEEDPQAQELAALIDEKGPQAALAQISGLDANSDVVAEAVNAYNATK</sequence>
<dbReference type="EC" id="1.1.1.17" evidence="1"/>
<dbReference type="EMBL" id="CP001127">
    <property type="protein sequence ID" value="ACF90353.1"/>
    <property type="molecule type" value="Genomic_DNA"/>
</dbReference>
<dbReference type="RefSeq" id="WP_000645385.1">
    <property type="nucleotide sequence ID" value="NC_011094.1"/>
</dbReference>
<dbReference type="SMR" id="B4TZT8"/>
<dbReference type="KEGG" id="sew:SeSA_A3886"/>
<dbReference type="HOGENOM" id="CLU_036089_2_0_6"/>
<dbReference type="Proteomes" id="UP000001865">
    <property type="component" value="Chromosome"/>
</dbReference>
<dbReference type="GO" id="GO:0005829">
    <property type="term" value="C:cytosol"/>
    <property type="evidence" value="ECO:0007669"/>
    <property type="project" value="TreeGrafter"/>
</dbReference>
<dbReference type="GO" id="GO:0008926">
    <property type="term" value="F:mannitol-1-phosphate 5-dehydrogenase activity"/>
    <property type="evidence" value="ECO:0007669"/>
    <property type="project" value="UniProtKB-UniRule"/>
</dbReference>
<dbReference type="GO" id="GO:0019592">
    <property type="term" value="P:mannitol catabolic process"/>
    <property type="evidence" value="ECO:0007669"/>
    <property type="project" value="TreeGrafter"/>
</dbReference>
<dbReference type="FunFam" id="1.10.1040.10:FF:000009">
    <property type="entry name" value="Mannitol-1-phosphate 5-dehydrogenase"/>
    <property type="match status" value="1"/>
</dbReference>
<dbReference type="FunFam" id="3.40.50.720:FF:000075">
    <property type="entry name" value="Mannitol-1-phosphate 5-dehydrogenase"/>
    <property type="match status" value="1"/>
</dbReference>
<dbReference type="Gene3D" id="1.10.1040.10">
    <property type="entry name" value="N-(1-d-carboxylethyl)-l-norvaline Dehydrogenase, domain 2"/>
    <property type="match status" value="1"/>
</dbReference>
<dbReference type="Gene3D" id="3.40.50.720">
    <property type="entry name" value="NAD(P)-binding Rossmann-like Domain"/>
    <property type="match status" value="1"/>
</dbReference>
<dbReference type="HAMAP" id="MF_00196">
    <property type="entry name" value="Mannitol_dehydrog"/>
    <property type="match status" value="1"/>
</dbReference>
<dbReference type="InterPro" id="IPR008927">
    <property type="entry name" value="6-PGluconate_DH-like_C_sf"/>
</dbReference>
<dbReference type="InterPro" id="IPR013328">
    <property type="entry name" value="6PGD_dom2"/>
</dbReference>
<dbReference type="InterPro" id="IPR023028">
    <property type="entry name" value="Mannitol_1_phos_5_DH"/>
</dbReference>
<dbReference type="InterPro" id="IPR000669">
    <property type="entry name" value="Mannitol_DH"/>
</dbReference>
<dbReference type="InterPro" id="IPR013118">
    <property type="entry name" value="Mannitol_DH_C"/>
</dbReference>
<dbReference type="InterPro" id="IPR023027">
    <property type="entry name" value="Mannitol_DH_CS"/>
</dbReference>
<dbReference type="InterPro" id="IPR013131">
    <property type="entry name" value="Mannitol_DH_N"/>
</dbReference>
<dbReference type="InterPro" id="IPR036291">
    <property type="entry name" value="NAD(P)-bd_dom_sf"/>
</dbReference>
<dbReference type="NCBIfam" id="NF002646">
    <property type="entry name" value="PRK02318.1-2"/>
    <property type="match status" value="1"/>
</dbReference>
<dbReference type="NCBIfam" id="NF002647">
    <property type="entry name" value="PRK02318.1-3"/>
    <property type="match status" value="1"/>
</dbReference>
<dbReference type="NCBIfam" id="NF002648">
    <property type="entry name" value="PRK02318.1-4"/>
    <property type="match status" value="1"/>
</dbReference>
<dbReference type="NCBIfam" id="NF002650">
    <property type="entry name" value="PRK02318.2-2"/>
    <property type="match status" value="1"/>
</dbReference>
<dbReference type="NCBIfam" id="NF002652">
    <property type="entry name" value="PRK02318.2-5"/>
    <property type="match status" value="1"/>
</dbReference>
<dbReference type="PANTHER" id="PTHR30524:SF0">
    <property type="entry name" value="ALTRONATE OXIDOREDUCTASE-RELATED"/>
    <property type="match status" value="1"/>
</dbReference>
<dbReference type="PANTHER" id="PTHR30524">
    <property type="entry name" value="MANNITOL-1-PHOSPHATE 5-DEHYDROGENASE"/>
    <property type="match status" value="1"/>
</dbReference>
<dbReference type="Pfam" id="PF01232">
    <property type="entry name" value="Mannitol_dh"/>
    <property type="match status" value="1"/>
</dbReference>
<dbReference type="Pfam" id="PF08125">
    <property type="entry name" value="Mannitol_dh_C"/>
    <property type="match status" value="1"/>
</dbReference>
<dbReference type="PRINTS" id="PR00084">
    <property type="entry name" value="MTLDHDRGNASE"/>
</dbReference>
<dbReference type="SUPFAM" id="SSF48179">
    <property type="entry name" value="6-phosphogluconate dehydrogenase C-terminal domain-like"/>
    <property type="match status" value="1"/>
</dbReference>
<dbReference type="SUPFAM" id="SSF51735">
    <property type="entry name" value="NAD(P)-binding Rossmann-fold domains"/>
    <property type="match status" value="1"/>
</dbReference>
<dbReference type="PROSITE" id="PS00974">
    <property type="entry name" value="MANNITOL_DHGENASE"/>
    <property type="match status" value="1"/>
</dbReference>
<protein>
    <recommendedName>
        <fullName evidence="1">Mannitol-1-phosphate 5-dehydrogenase</fullName>
        <ecNumber evidence="1">1.1.1.17</ecNumber>
    </recommendedName>
</protein>
<gene>
    <name evidence="1" type="primary">mtlD</name>
    <name type="ordered locus">SeSA_A3886</name>
</gene>
<evidence type="ECO:0000255" key="1">
    <source>
        <dbReference type="HAMAP-Rule" id="MF_00196"/>
    </source>
</evidence>
<comment type="catalytic activity">
    <reaction evidence="1">
        <text>D-mannitol 1-phosphate + NAD(+) = beta-D-fructose 6-phosphate + NADH + H(+)</text>
        <dbReference type="Rhea" id="RHEA:19661"/>
        <dbReference type="ChEBI" id="CHEBI:15378"/>
        <dbReference type="ChEBI" id="CHEBI:57540"/>
        <dbReference type="ChEBI" id="CHEBI:57634"/>
        <dbReference type="ChEBI" id="CHEBI:57945"/>
        <dbReference type="ChEBI" id="CHEBI:61381"/>
        <dbReference type="EC" id="1.1.1.17"/>
    </reaction>
</comment>
<comment type="similarity">
    <text evidence="1">Belongs to the mannitol dehydrogenase family.</text>
</comment>
<accession>B4TZT8</accession>